<feature type="chain" id="PRO_0000139766" description="Putative ammonium transporter MTH_661">
    <location>
        <begin position="1"/>
        <end position="407"/>
    </location>
</feature>
<feature type="transmembrane region" description="Helical" evidence="1">
    <location>
        <begin position="9"/>
        <end position="29"/>
    </location>
</feature>
<feature type="transmembrane region" description="Helical" evidence="1">
    <location>
        <begin position="47"/>
        <end position="67"/>
    </location>
</feature>
<feature type="transmembrane region" description="Helical" evidence="1">
    <location>
        <begin position="70"/>
        <end position="90"/>
    </location>
</feature>
<feature type="transmembrane region" description="Helical" evidence="1">
    <location>
        <begin position="101"/>
        <end position="121"/>
    </location>
</feature>
<feature type="transmembrane region" description="Helical" evidence="1">
    <location>
        <begin position="129"/>
        <end position="149"/>
    </location>
</feature>
<feature type="transmembrane region" description="Helical" evidence="1">
    <location>
        <begin position="162"/>
        <end position="182"/>
    </location>
</feature>
<feature type="transmembrane region" description="Helical" evidence="1">
    <location>
        <begin position="196"/>
        <end position="216"/>
    </location>
</feature>
<feature type="transmembrane region" description="Helical" evidence="1">
    <location>
        <begin position="226"/>
        <end position="246"/>
    </location>
</feature>
<feature type="transmembrane region" description="Helical" evidence="1">
    <location>
        <begin position="257"/>
        <end position="277"/>
    </location>
</feature>
<feature type="transmembrane region" description="Helical" evidence="1">
    <location>
        <begin position="279"/>
        <end position="299"/>
    </location>
</feature>
<feature type="transmembrane region" description="Helical" evidence="1">
    <location>
        <begin position="312"/>
        <end position="332"/>
    </location>
</feature>
<feature type="transmembrane region" description="Helical" evidence="1">
    <location>
        <begin position="357"/>
        <end position="377"/>
    </location>
</feature>
<evidence type="ECO:0000255" key="1"/>
<evidence type="ECO:0000305" key="2"/>
<protein>
    <recommendedName>
        <fullName>Putative ammonium transporter MTH_661</fullName>
    </recommendedName>
</protein>
<organism>
    <name type="scientific">Methanothermobacter thermautotrophicus (strain ATCC 29096 / DSM 1053 / JCM 10044 / NBRC 100330 / Delta H)</name>
    <name type="common">Methanobacterium thermoautotrophicum</name>
    <dbReference type="NCBI Taxonomy" id="187420"/>
    <lineage>
        <taxon>Archaea</taxon>
        <taxon>Methanobacteriati</taxon>
        <taxon>Methanobacteriota</taxon>
        <taxon>Methanomada group</taxon>
        <taxon>Methanobacteria</taxon>
        <taxon>Methanobacteriales</taxon>
        <taxon>Methanobacteriaceae</taxon>
        <taxon>Methanothermobacter</taxon>
    </lineage>
</organism>
<sequence>MMLNSGDTAWMLISTALVILMTVPGVAMFYSGLTKRENVLNTIFLSFVSLGIVSLLWFLFGYGLIFGGDVSGIIGSHQVGISLINLGSASKYAPTIPEGLFAIFQMTFAAITVALISGAVVERIKFSSWILFIPLWFALVYVPVAHWVWGGGFLQNLGVHDFAGGIVVHITSGIAALALALVTGPRYDQKLMPHHLGYSVIGTGLLWFGWFGFNAGSALSAGSLAANAMIVTNTSAAAGMIGWILMDRLKTGKPTLLGALSGAVAGLASITPAAGFVDIGASIVTGLVAAVICYLAVSWLKPAAGYDDALDVFGIHGVSGIIGTLGVGLFAVPALNPSLTSGGLLTGSTSLLVSQLIGVVTVTVYTFVVTYILAMLLMKFKGLRVEREEEIQGLDINLHEETGYRLT</sequence>
<accession>O26757</accession>
<name>Y661_METTH</name>
<gene>
    <name type="ordered locus">MTH_661</name>
</gene>
<proteinExistence type="inferred from homology"/>
<comment type="subcellular location">
    <subcellularLocation>
        <location evidence="2">Cell membrane</location>
        <topology evidence="2">Multi-pass membrane protein</topology>
    </subcellularLocation>
</comment>
<comment type="similarity">
    <text evidence="2">Belongs to the ammonia transporter channel (TC 1.A.11.2) family.</text>
</comment>
<dbReference type="EMBL" id="AE000666">
    <property type="protein sequence ID" value="AAB85166.1"/>
    <property type="molecule type" value="Genomic_DNA"/>
</dbReference>
<dbReference type="PIR" id="A69188">
    <property type="entry name" value="A69188"/>
</dbReference>
<dbReference type="RefSeq" id="WP_010876299.1">
    <property type="nucleotide sequence ID" value="NC_000916.1"/>
</dbReference>
<dbReference type="SMR" id="O26757"/>
<dbReference type="FunCoup" id="O26757">
    <property type="interactions" value="11"/>
</dbReference>
<dbReference type="STRING" id="187420.MTH_661"/>
<dbReference type="PaxDb" id="187420-MTH_661"/>
<dbReference type="EnsemblBacteria" id="AAB85166">
    <property type="protein sequence ID" value="AAB85166"/>
    <property type="gene ID" value="MTH_661"/>
</dbReference>
<dbReference type="KEGG" id="mth:MTH_661"/>
<dbReference type="HOGENOM" id="CLU_000445_33_0_2"/>
<dbReference type="InParanoid" id="O26757"/>
<dbReference type="Proteomes" id="UP000005223">
    <property type="component" value="Chromosome"/>
</dbReference>
<dbReference type="GO" id="GO:0005886">
    <property type="term" value="C:plasma membrane"/>
    <property type="evidence" value="ECO:0007669"/>
    <property type="project" value="UniProtKB-SubCell"/>
</dbReference>
<dbReference type="GO" id="GO:0008519">
    <property type="term" value="F:ammonium channel activity"/>
    <property type="evidence" value="ECO:0007669"/>
    <property type="project" value="InterPro"/>
</dbReference>
<dbReference type="Gene3D" id="1.10.3430.10">
    <property type="entry name" value="Ammonium transporter AmtB like domains"/>
    <property type="match status" value="1"/>
</dbReference>
<dbReference type="InterPro" id="IPR029020">
    <property type="entry name" value="Ammonium/urea_transptr"/>
</dbReference>
<dbReference type="InterPro" id="IPR001905">
    <property type="entry name" value="Ammonium_transpt"/>
</dbReference>
<dbReference type="InterPro" id="IPR018047">
    <property type="entry name" value="Ammonium_transpt_CS"/>
</dbReference>
<dbReference type="InterPro" id="IPR024041">
    <property type="entry name" value="NH4_transpt_AmtB-like_dom"/>
</dbReference>
<dbReference type="InterPro" id="IPR002229">
    <property type="entry name" value="RhesusRHD"/>
</dbReference>
<dbReference type="NCBIfam" id="TIGR00836">
    <property type="entry name" value="amt"/>
    <property type="match status" value="1"/>
</dbReference>
<dbReference type="PANTHER" id="PTHR43029">
    <property type="entry name" value="AMMONIUM TRANSPORTER MEP2"/>
    <property type="match status" value="1"/>
</dbReference>
<dbReference type="PANTHER" id="PTHR43029:SF10">
    <property type="entry name" value="AMMONIUM TRANSPORTER MEP2"/>
    <property type="match status" value="1"/>
</dbReference>
<dbReference type="Pfam" id="PF00909">
    <property type="entry name" value="Ammonium_transp"/>
    <property type="match status" value="1"/>
</dbReference>
<dbReference type="PRINTS" id="PR00342">
    <property type="entry name" value="RHESUSRHD"/>
</dbReference>
<dbReference type="SUPFAM" id="SSF111352">
    <property type="entry name" value="Ammonium transporter"/>
    <property type="match status" value="1"/>
</dbReference>
<dbReference type="PROSITE" id="PS01219">
    <property type="entry name" value="AMMONIUM_TRANSP"/>
    <property type="match status" value="1"/>
</dbReference>
<reference key="1">
    <citation type="journal article" date="1997" name="J. Bacteriol.">
        <title>Complete genome sequence of Methanobacterium thermoautotrophicum deltaH: functional analysis and comparative genomics.</title>
        <authorList>
            <person name="Smith D.R."/>
            <person name="Doucette-Stamm L.A."/>
            <person name="Deloughery C."/>
            <person name="Lee H.-M."/>
            <person name="Dubois J."/>
            <person name="Aldredge T."/>
            <person name="Bashirzadeh R."/>
            <person name="Blakely D."/>
            <person name="Cook R."/>
            <person name="Gilbert K."/>
            <person name="Harrison D."/>
            <person name="Hoang L."/>
            <person name="Keagle P."/>
            <person name="Lumm W."/>
            <person name="Pothier B."/>
            <person name="Qiu D."/>
            <person name="Spadafora R."/>
            <person name="Vicare R."/>
            <person name="Wang Y."/>
            <person name="Wierzbowski J."/>
            <person name="Gibson R."/>
            <person name="Jiwani N."/>
            <person name="Caruso A."/>
            <person name="Bush D."/>
            <person name="Safer H."/>
            <person name="Patwell D."/>
            <person name="Prabhakar S."/>
            <person name="McDougall S."/>
            <person name="Shimer G."/>
            <person name="Goyal A."/>
            <person name="Pietrovski S."/>
            <person name="Church G.M."/>
            <person name="Daniels C.J."/>
            <person name="Mao J.-I."/>
            <person name="Rice P."/>
            <person name="Noelling J."/>
            <person name="Reeve J.N."/>
        </authorList>
    </citation>
    <scope>NUCLEOTIDE SEQUENCE [LARGE SCALE GENOMIC DNA]</scope>
    <source>
        <strain>ATCC 29096 / DSM 1053 / JCM 10044 / NBRC 100330 / Delta H</strain>
    </source>
</reference>
<keyword id="KW-0924">Ammonia transport</keyword>
<keyword id="KW-1003">Cell membrane</keyword>
<keyword id="KW-0472">Membrane</keyword>
<keyword id="KW-1185">Reference proteome</keyword>
<keyword id="KW-0812">Transmembrane</keyword>
<keyword id="KW-1133">Transmembrane helix</keyword>
<keyword id="KW-0813">Transport</keyword>